<keyword id="KW-0028">Amino-acid biosynthesis</keyword>
<keyword id="KW-0057">Aromatic amino acid biosynthesis</keyword>
<keyword id="KW-0328">Glycosyltransferase</keyword>
<keyword id="KW-0460">Magnesium</keyword>
<keyword id="KW-0479">Metal-binding</keyword>
<keyword id="KW-0808">Transferase</keyword>
<keyword id="KW-0822">Tryptophan biosynthesis</keyword>
<protein>
    <recommendedName>
        <fullName evidence="1">Anthranilate phosphoribosyltransferase</fullName>
        <ecNumber evidence="1">2.4.2.18</ecNumber>
    </recommendedName>
</protein>
<accession>B2I6S4</accession>
<reference key="1">
    <citation type="journal article" date="2010" name="J. Bacteriol.">
        <title>Whole genome sequences of two Xylella fastidiosa strains (M12 and M23) causing almond leaf scorch disease in California.</title>
        <authorList>
            <person name="Chen J."/>
            <person name="Xie G."/>
            <person name="Han S."/>
            <person name="Chertkov O."/>
            <person name="Sims D."/>
            <person name="Civerolo E.L."/>
        </authorList>
    </citation>
    <scope>NUCLEOTIDE SEQUENCE [LARGE SCALE GENOMIC DNA]</scope>
    <source>
        <strain>M23</strain>
    </source>
</reference>
<feature type="chain" id="PRO_1000099859" description="Anthranilate phosphoribosyltransferase">
    <location>
        <begin position="1"/>
        <end position="344"/>
    </location>
</feature>
<feature type="binding site" evidence="1">
    <location>
        <position position="84"/>
    </location>
    <ligand>
        <name>5-phospho-alpha-D-ribose 1-diphosphate</name>
        <dbReference type="ChEBI" id="CHEBI:58017"/>
    </ligand>
</feature>
<feature type="binding site" evidence="1">
    <location>
        <position position="84"/>
    </location>
    <ligand>
        <name>anthranilate</name>
        <dbReference type="ChEBI" id="CHEBI:16567"/>
        <label>1</label>
    </ligand>
</feature>
<feature type="binding site" evidence="1">
    <location>
        <begin position="87"/>
        <end position="88"/>
    </location>
    <ligand>
        <name>5-phospho-alpha-D-ribose 1-diphosphate</name>
        <dbReference type="ChEBI" id="CHEBI:58017"/>
    </ligand>
</feature>
<feature type="binding site" evidence="1">
    <location>
        <position position="92"/>
    </location>
    <ligand>
        <name>5-phospho-alpha-D-ribose 1-diphosphate</name>
        <dbReference type="ChEBI" id="CHEBI:58017"/>
    </ligand>
</feature>
<feature type="binding site" evidence="1">
    <location>
        <begin position="94"/>
        <end position="97"/>
    </location>
    <ligand>
        <name>5-phospho-alpha-D-ribose 1-diphosphate</name>
        <dbReference type="ChEBI" id="CHEBI:58017"/>
    </ligand>
</feature>
<feature type="binding site" evidence="1">
    <location>
        <position position="96"/>
    </location>
    <ligand>
        <name>Mg(2+)</name>
        <dbReference type="ChEBI" id="CHEBI:18420"/>
        <label>1</label>
    </ligand>
</feature>
<feature type="binding site" evidence="1">
    <location>
        <begin position="112"/>
        <end position="120"/>
    </location>
    <ligand>
        <name>5-phospho-alpha-D-ribose 1-diphosphate</name>
        <dbReference type="ChEBI" id="CHEBI:58017"/>
    </ligand>
</feature>
<feature type="binding site" evidence="1">
    <location>
        <position position="115"/>
    </location>
    <ligand>
        <name>anthranilate</name>
        <dbReference type="ChEBI" id="CHEBI:16567"/>
        <label>1</label>
    </ligand>
</feature>
<feature type="binding site" evidence="1">
    <location>
        <position position="124"/>
    </location>
    <ligand>
        <name>5-phospho-alpha-D-ribose 1-diphosphate</name>
        <dbReference type="ChEBI" id="CHEBI:58017"/>
    </ligand>
</feature>
<feature type="binding site" evidence="1">
    <location>
        <position position="170"/>
    </location>
    <ligand>
        <name>anthranilate</name>
        <dbReference type="ChEBI" id="CHEBI:16567"/>
        <label>2</label>
    </ligand>
</feature>
<feature type="binding site" evidence="1">
    <location>
        <position position="229"/>
    </location>
    <ligand>
        <name>Mg(2+)</name>
        <dbReference type="ChEBI" id="CHEBI:18420"/>
        <label>2</label>
    </ligand>
</feature>
<feature type="binding site" evidence="1">
    <location>
        <position position="230"/>
    </location>
    <ligand>
        <name>Mg(2+)</name>
        <dbReference type="ChEBI" id="CHEBI:18420"/>
        <label>1</label>
    </ligand>
</feature>
<feature type="binding site" evidence="1">
    <location>
        <position position="230"/>
    </location>
    <ligand>
        <name>Mg(2+)</name>
        <dbReference type="ChEBI" id="CHEBI:18420"/>
        <label>2</label>
    </ligand>
</feature>
<evidence type="ECO:0000255" key="1">
    <source>
        <dbReference type="HAMAP-Rule" id="MF_00211"/>
    </source>
</evidence>
<name>TRPD_XYLF2</name>
<organism>
    <name type="scientific">Xylella fastidiosa (strain M23)</name>
    <dbReference type="NCBI Taxonomy" id="405441"/>
    <lineage>
        <taxon>Bacteria</taxon>
        <taxon>Pseudomonadati</taxon>
        <taxon>Pseudomonadota</taxon>
        <taxon>Gammaproteobacteria</taxon>
        <taxon>Lysobacterales</taxon>
        <taxon>Lysobacteraceae</taxon>
        <taxon>Xylella</taxon>
    </lineage>
</organism>
<comment type="function">
    <text evidence="1">Catalyzes the transfer of the phosphoribosyl group of 5-phosphorylribose-1-pyrophosphate (PRPP) to anthranilate to yield N-(5'-phosphoribosyl)-anthranilate (PRA).</text>
</comment>
<comment type="catalytic activity">
    <reaction evidence="1">
        <text>N-(5-phospho-beta-D-ribosyl)anthranilate + diphosphate = 5-phospho-alpha-D-ribose 1-diphosphate + anthranilate</text>
        <dbReference type="Rhea" id="RHEA:11768"/>
        <dbReference type="ChEBI" id="CHEBI:16567"/>
        <dbReference type="ChEBI" id="CHEBI:18277"/>
        <dbReference type="ChEBI" id="CHEBI:33019"/>
        <dbReference type="ChEBI" id="CHEBI:58017"/>
        <dbReference type="EC" id="2.4.2.18"/>
    </reaction>
</comment>
<comment type="cofactor">
    <cofactor evidence="1">
        <name>Mg(2+)</name>
        <dbReference type="ChEBI" id="CHEBI:18420"/>
    </cofactor>
    <text evidence="1">Binds 2 magnesium ions per monomer.</text>
</comment>
<comment type="pathway">
    <text evidence="1">Amino-acid biosynthesis; L-tryptophan biosynthesis; L-tryptophan from chorismate: step 2/5.</text>
</comment>
<comment type="subunit">
    <text evidence="1">Homodimer.</text>
</comment>
<comment type="similarity">
    <text evidence="1">Belongs to the anthranilate phosphoribosyltransferase family.</text>
</comment>
<proteinExistence type="inferred from homology"/>
<dbReference type="EC" id="2.4.2.18" evidence="1"/>
<dbReference type="EMBL" id="CP001011">
    <property type="protein sequence ID" value="ACB91616.1"/>
    <property type="molecule type" value="Genomic_DNA"/>
</dbReference>
<dbReference type="RefSeq" id="WP_004572976.1">
    <property type="nucleotide sequence ID" value="NC_010577.1"/>
</dbReference>
<dbReference type="SMR" id="B2I6S4"/>
<dbReference type="GeneID" id="93903862"/>
<dbReference type="KEGG" id="xfn:XfasM23_0159"/>
<dbReference type="HOGENOM" id="CLU_034315_2_1_6"/>
<dbReference type="UniPathway" id="UPA00035">
    <property type="reaction ID" value="UER00041"/>
</dbReference>
<dbReference type="Proteomes" id="UP000001698">
    <property type="component" value="Chromosome"/>
</dbReference>
<dbReference type="GO" id="GO:0005829">
    <property type="term" value="C:cytosol"/>
    <property type="evidence" value="ECO:0007669"/>
    <property type="project" value="TreeGrafter"/>
</dbReference>
<dbReference type="GO" id="GO:0004048">
    <property type="term" value="F:anthranilate phosphoribosyltransferase activity"/>
    <property type="evidence" value="ECO:0007669"/>
    <property type="project" value="UniProtKB-UniRule"/>
</dbReference>
<dbReference type="GO" id="GO:0000287">
    <property type="term" value="F:magnesium ion binding"/>
    <property type="evidence" value="ECO:0007669"/>
    <property type="project" value="UniProtKB-UniRule"/>
</dbReference>
<dbReference type="GO" id="GO:0000162">
    <property type="term" value="P:L-tryptophan biosynthetic process"/>
    <property type="evidence" value="ECO:0007669"/>
    <property type="project" value="UniProtKB-UniRule"/>
</dbReference>
<dbReference type="FunFam" id="3.40.1030.10:FF:000002">
    <property type="entry name" value="Anthranilate phosphoribosyltransferase"/>
    <property type="match status" value="1"/>
</dbReference>
<dbReference type="Gene3D" id="3.40.1030.10">
    <property type="entry name" value="Nucleoside phosphorylase/phosphoribosyltransferase catalytic domain"/>
    <property type="match status" value="1"/>
</dbReference>
<dbReference type="Gene3D" id="1.20.970.10">
    <property type="entry name" value="Transferase, Pyrimidine Nucleoside Phosphorylase, Chain C"/>
    <property type="match status" value="1"/>
</dbReference>
<dbReference type="HAMAP" id="MF_00211">
    <property type="entry name" value="TrpD"/>
    <property type="match status" value="1"/>
</dbReference>
<dbReference type="InterPro" id="IPR005940">
    <property type="entry name" value="Anthranilate_Pribosyl_Tfrase"/>
</dbReference>
<dbReference type="InterPro" id="IPR000312">
    <property type="entry name" value="Glycosyl_Trfase_fam3"/>
</dbReference>
<dbReference type="InterPro" id="IPR017459">
    <property type="entry name" value="Glycosyl_Trfase_fam3_N_dom"/>
</dbReference>
<dbReference type="InterPro" id="IPR036320">
    <property type="entry name" value="Glycosyl_Trfase_fam3_N_dom_sf"/>
</dbReference>
<dbReference type="InterPro" id="IPR035902">
    <property type="entry name" value="Nuc_phospho_transferase"/>
</dbReference>
<dbReference type="NCBIfam" id="TIGR01245">
    <property type="entry name" value="trpD"/>
    <property type="match status" value="1"/>
</dbReference>
<dbReference type="PANTHER" id="PTHR43285">
    <property type="entry name" value="ANTHRANILATE PHOSPHORIBOSYLTRANSFERASE"/>
    <property type="match status" value="1"/>
</dbReference>
<dbReference type="PANTHER" id="PTHR43285:SF2">
    <property type="entry name" value="ANTHRANILATE PHOSPHORIBOSYLTRANSFERASE"/>
    <property type="match status" value="1"/>
</dbReference>
<dbReference type="Pfam" id="PF02885">
    <property type="entry name" value="Glycos_trans_3N"/>
    <property type="match status" value="1"/>
</dbReference>
<dbReference type="Pfam" id="PF00591">
    <property type="entry name" value="Glycos_transf_3"/>
    <property type="match status" value="1"/>
</dbReference>
<dbReference type="SUPFAM" id="SSF52418">
    <property type="entry name" value="Nucleoside phosphorylase/phosphoribosyltransferase catalytic domain"/>
    <property type="match status" value="1"/>
</dbReference>
<dbReference type="SUPFAM" id="SSF47648">
    <property type="entry name" value="Nucleoside phosphorylase/phosphoribosyltransferase N-terminal domain"/>
    <property type="match status" value="1"/>
</dbReference>
<gene>
    <name evidence="1" type="primary">trpD</name>
    <name type="ordered locus">XfasM23_0159</name>
</gene>
<sequence length="344" mass="36650">MSMTAQKALQRIVEHREILQDEMVQLMRQIMNSEVSGIMVAAILAGLRVKKETVGEIAGAATVMREFSRKVNVQDRTHLVDIVGTGGDGWHTFNISTCAMFVAAAAGAKVAKHGNRSVSSKSGSADVLEALGASIELQPLEVAEAIGCIGVGFMFAPIHHPVMQVVSPVRREMGVRTIFNILGPLTNPADAPNILMGVFDPDLVGIQVHVLHKLGAERALVVCGRDGMDELSLGTTTLVGELRGGRVCEYEVSPEDYGMAVSPISNLRVESSAESREMLLNVLAGKPGPALDVVALNAGAALYVAGVAQDIGHGVALAREVIFNGRARNILNQYVAFTRRPRNV</sequence>